<organism>
    <name type="scientific">Syntrophobacter fumaroxidans (strain DSM 10017 / MPOB)</name>
    <dbReference type="NCBI Taxonomy" id="335543"/>
    <lineage>
        <taxon>Bacteria</taxon>
        <taxon>Pseudomonadati</taxon>
        <taxon>Thermodesulfobacteriota</taxon>
        <taxon>Syntrophobacteria</taxon>
        <taxon>Syntrophobacterales</taxon>
        <taxon>Syntrophobacteraceae</taxon>
        <taxon>Syntrophobacter</taxon>
    </lineage>
</organism>
<name>SFSA_SYNFM</name>
<proteinExistence type="inferred from homology"/>
<gene>
    <name evidence="1" type="primary">sfsA</name>
    <name type="ordered locus">Sfum_4077</name>
</gene>
<keyword id="KW-1185">Reference proteome</keyword>
<protein>
    <recommendedName>
        <fullName evidence="1">Sugar fermentation stimulation protein homolog</fullName>
    </recommendedName>
</protein>
<accession>A0LQP0</accession>
<sequence>MTDSAKPQNPDPGHESRRVAPLAGSPRSPFLIEFPEDSFTAVFLGREKRFLVEAERNGHLFQAHCNNSGSMLGLLRPGSDILLSVSPNPSRRLPYTLESIKLGSHWVGVNTLVPNRILRLAWDRGILPELIGYDRFQNEKTSGESRLDAFAEGPAGQVWIEAKNVTLVEDDVACFPDAVTVRGQKHMRELTALARAGRRAACFFLVQRPDASCFAPADFIDPVYAELFHAAVHAGVEIWPYEAVVTRQGIALGRRLKVVGH</sequence>
<evidence type="ECO:0000255" key="1">
    <source>
        <dbReference type="HAMAP-Rule" id="MF_00095"/>
    </source>
</evidence>
<evidence type="ECO:0000256" key="2">
    <source>
        <dbReference type="SAM" id="MobiDB-lite"/>
    </source>
</evidence>
<reference key="1">
    <citation type="submission" date="2006-10" db="EMBL/GenBank/DDBJ databases">
        <title>Complete sequence of Syntrophobacter fumaroxidans MPOB.</title>
        <authorList>
            <consortium name="US DOE Joint Genome Institute"/>
            <person name="Copeland A."/>
            <person name="Lucas S."/>
            <person name="Lapidus A."/>
            <person name="Barry K."/>
            <person name="Detter J.C."/>
            <person name="Glavina del Rio T."/>
            <person name="Hammon N."/>
            <person name="Israni S."/>
            <person name="Pitluck S."/>
            <person name="Goltsman E.G."/>
            <person name="Martinez M."/>
            <person name="Schmutz J."/>
            <person name="Larimer F."/>
            <person name="Land M."/>
            <person name="Hauser L."/>
            <person name="Kyrpides N."/>
            <person name="Kim E."/>
            <person name="Boone D.R."/>
            <person name="Brockman F."/>
            <person name="Culley D."/>
            <person name="Ferry J."/>
            <person name="Gunsalus R."/>
            <person name="McInerney M.J."/>
            <person name="Morrison M."/>
            <person name="Plugge C."/>
            <person name="Rohlin L."/>
            <person name="Scholten J."/>
            <person name="Sieber J."/>
            <person name="Stams A.J.M."/>
            <person name="Worm P."/>
            <person name="Henstra A.M."/>
            <person name="Richardson P."/>
        </authorList>
    </citation>
    <scope>NUCLEOTIDE SEQUENCE [LARGE SCALE GENOMIC DNA]</scope>
    <source>
        <strain>DSM 10017 / MPOB</strain>
    </source>
</reference>
<dbReference type="EMBL" id="CP000478">
    <property type="protein sequence ID" value="ABK19742.1"/>
    <property type="molecule type" value="Genomic_DNA"/>
</dbReference>
<dbReference type="RefSeq" id="WP_011700855.1">
    <property type="nucleotide sequence ID" value="NC_008554.1"/>
</dbReference>
<dbReference type="SMR" id="A0LQP0"/>
<dbReference type="FunCoup" id="A0LQP0">
    <property type="interactions" value="20"/>
</dbReference>
<dbReference type="STRING" id="335543.Sfum_4077"/>
<dbReference type="KEGG" id="sfu:Sfum_4077"/>
<dbReference type="eggNOG" id="COG1489">
    <property type="taxonomic scope" value="Bacteria"/>
</dbReference>
<dbReference type="HOGENOM" id="CLU_052299_1_0_7"/>
<dbReference type="InParanoid" id="A0LQP0"/>
<dbReference type="OrthoDB" id="9802365at2"/>
<dbReference type="Proteomes" id="UP000001784">
    <property type="component" value="Chromosome"/>
</dbReference>
<dbReference type="GO" id="GO:0003677">
    <property type="term" value="F:DNA binding"/>
    <property type="evidence" value="ECO:0007669"/>
    <property type="project" value="InterPro"/>
</dbReference>
<dbReference type="CDD" id="cd22359">
    <property type="entry name" value="SfsA-like_bacterial"/>
    <property type="match status" value="1"/>
</dbReference>
<dbReference type="Gene3D" id="2.40.50.580">
    <property type="match status" value="1"/>
</dbReference>
<dbReference type="Gene3D" id="3.40.1350.60">
    <property type="match status" value="1"/>
</dbReference>
<dbReference type="HAMAP" id="MF_00095">
    <property type="entry name" value="SfsA"/>
    <property type="match status" value="1"/>
</dbReference>
<dbReference type="InterPro" id="IPR005224">
    <property type="entry name" value="SfsA"/>
</dbReference>
<dbReference type="InterPro" id="IPR040452">
    <property type="entry name" value="SfsA_C"/>
</dbReference>
<dbReference type="InterPro" id="IPR041465">
    <property type="entry name" value="SfsA_N"/>
</dbReference>
<dbReference type="NCBIfam" id="TIGR00230">
    <property type="entry name" value="sfsA"/>
    <property type="match status" value="1"/>
</dbReference>
<dbReference type="PANTHER" id="PTHR30545">
    <property type="entry name" value="SUGAR FERMENTATION STIMULATION PROTEIN A"/>
    <property type="match status" value="1"/>
</dbReference>
<dbReference type="PANTHER" id="PTHR30545:SF2">
    <property type="entry name" value="SUGAR FERMENTATION STIMULATION PROTEIN A"/>
    <property type="match status" value="1"/>
</dbReference>
<dbReference type="Pfam" id="PF03749">
    <property type="entry name" value="SfsA"/>
    <property type="match status" value="1"/>
</dbReference>
<dbReference type="Pfam" id="PF17746">
    <property type="entry name" value="SfsA_N"/>
    <property type="match status" value="1"/>
</dbReference>
<feature type="chain" id="PRO_0000340159" description="Sugar fermentation stimulation protein homolog">
    <location>
        <begin position="1"/>
        <end position="261"/>
    </location>
</feature>
<feature type="region of interest" description="Disordered" evidence="2">
    <location>
        <begin position="1"/>
        <end position="23"/>
    </location>
</feature>
<comment type="similarity">
    <text evidence="1">Belongs to the SfsA family.</text>
</comment>